<proteinExistence type="evidence at protein level"/>
<keyword id="KW-0025">Alternative splicing</keyword>
<keyword id="KW-0067">ATP-binding</keyword>
<keyword id="KW-0963">Cytoplasm</keyword>
<keyword id="KW-0217">Developmental protein</keyword>
<keyword id="KW-0418">Kinase</keyword>
<keyword id="KW-0460">Magnesium</keyword>
<keyword id="KW-0479">Metal-binding</keyword>
<keyword id="KW-0547">Nucleotide-binding</keyword>
<keyword id="KW-0539">Nucleus</keyword>
<keyword id="KW-1185">Reference proteome</keyword>
<keyword id="KW-0723">Serine/threonine-protein kinase</keyword>
<keyword id="KW-0808">Transferase</keyword>
<keyword id="KW-0879">Wnt signaling pathway</keyword>
<protein>
    <recommendedName>
        <fullName evidence="1">Serine/threonine kinase NLK</fullName>
        <ecNumber evidence="1">2.7.11.24</ecNumber>
    </recommendedName>
    <alternativeName>
        <fullName>Loss of intestine protein 1</fullName>
    </alternativeName>
    <alternativeName>
        <fullName evidence="1">Nemo-like kinase</fullName>
    </alternativeName>
</protein>
<name>NLK_CAEEL</name>
<gene>
    <name evidence="14 21" type="primary">lit-1</name>
    <name evidence="1" type="synonym">nlk</name>
    <name evidence="21" type="ORF">W06F12.1</name>
</gene>
<organism>
    <name type="scientific">Caenorhabditis elegans</name>
    <dbReference type="NCBI Taxonomy" id="6239"/>
    <lineage>
        <taxon>Eukaryota</taxon>
        <taxon>Metazoa</taxon>
        <taxon>Ecdysozoa</taxon>
        <taxon>Nematoda</taxon>
        <taxon>Chromadorea</taxon>
        <taxon>Rhabditida</taxon>
        <taxon>Rhabditina</taxon>
        <taxon>Rhabditomorpha</taxon>
        <taxon>Rhabditoidea</taxon>
        <taxon>Rhabditidae</taxon>
        <taxon>Peloderinae</taxon>
        <taxon>Caenorhabditis</taxon>
    </lineage>
</organism>
<dbReference type="EC" id="2.7.11.24" evidence="1"/>
<dbReference type="EMBL" id="AF143243">
    <property type="protein sequence ID" value="AAD37360.1"/>
    <property type="molecule type" value="mRNA"/>
</dbReference>
<dbReference type="EMBL" id="AF143244">
    <property type="protein sequence ID" value="AAD37361.1"/>
    <property type="molecule type" value="mRNA"/>
</dbReference>
<dbReference type="EMBL" id="AF145376">
    <property type="protein sequence ID" value="AAD39815.1"/>
    <property type="molecule type" value="mRNA"/>
</dbReference>
<dbReference type="EMBL" id="BX284603">
    <property type="protein sequence ID" value="CAB05827.2"/>
    <property type="molecule type" value="Genomic_DNA"/>
</dbReference>
<dbReference type="EMBL" id="BX284603">
    <property type="protein sequence ID" value="CAB60300.2"/>
    <property type="molecule type" value="Genomic_DNA"/>
</dbReference>
<dbReference type="EMBL" id="BX284603">
    <property type="protein sequence ID" value="CAD18878.1"/>
    <property type="molecule type" value="Genomic_DNA"/>
</dbReference>
<dbReference type="EMBL" id="BX284603">
    <property type="protein sequence ID" value="CAH10803.1"/>
    <property type="molecule type" value="Genomic_DNA"/>
</dbReference>
<dbReference type="EMBL" id="BX284603">
    <property type="protein sequence ID" value="CAH10804.1"/>
    <property type="molecule type" value="Genomic_DNA"/>
</dbReference>
<dbReference type="EMBL" id="Z92822">
    <property type="protein sequence ID" value="CAH10804.1"/>
    <property type="status" value="JOINED"/>
    <property type="molecule type" value="Genomic_DNA"/>
</dbReference>
<dbReference type="PIR" id="T26240">
    <property type="entry name" value="T26240"/>
</dbReference>
<dbReference type="RefSeq" id="NP_001022805.1">
    <molecule id="Q9U9Y8-1"/>
    <property type="nucleotide sequence ID" value="NM_001027634.3"/>
</dbReference>
<dbReference type="RefSeq" id="NP_001022806.1">
    <molecule id="Q9U9Y8-2"/>
    <property type="nucleotide sequence ID" value="NM_001027635.6"/>
</dbReference>
<dbReference type="RefSeq" id="NP_001022807.1">
    <molecule id="Q9U9Y8-3"/>
    <property type="nucleotide sequence ID" value="NM_001027636.4"/>
</dbReference>
<dbReference type="RefSeq" id="NP_001022808.1">
    <molecule id="Q9U9Y8-4"/>
    <property type="nucleotide sequence ID" value="NM_001027637.6"/>
</dbReference>
<dbReference type="RefSeq" id="NP_001022809.1">
    <property type="nucleotide sequence ID" value="NM_001027638.3"/>
</dbReference>
<dbReference type="RefSeq" id="NP_001367102.1">
    <molecule id="Q9U9Y8-5"/>
    <property type="nucleotide sequence ID" value="NM_001379989.1"/>
</dbReference>
<dbReference type="SMR" id="Q9U9Y8"/>
<dbReference type="BioGRID" id="41974">
    <property type="interactions" value="84"/>
</dbReference>
<dbReference type="ComplexPortal" id="CPX-1130">
    <property type="entry name" value="Beta-catenin-lit-1 complex"/>
</dbReference>
<dbReference type="DIP" id="DIP-25624N"/>
<dbReference type="FunCoup" id="Q9U9Y8">
    <property type="interactions" value="2829"/>
</dbReference>
<dbReference type="IntAct" id="Q9U9Y8">
    <property type="interactions" value="42"/>
</dbReference>
<dbReference type="STRING" id="6239.W06F12.1a.1"/>
<dbReference type="PaxDb" id="6239-W06F12.1a"/>
<dbReference type="PeptideAtlas" id="Q9U9Y8"/>
<dbReference type="EnsemblMetazoa" id="W06F12.1a.1">
    <molecule id="Q9U9Y8-1"/>
    <property type="protein sequence ID" value="W06F12.1a.1"/>
    <property type="gene ID" value="WBGene00003048"/>
</dbReference>
<dbReference type="EnsemblMetazoa" id="W06F12.1b.1">
    <molecule id="Q9U9Y8-2"/>
    <property type="protein sequence ID" value="W06F12.1b.1"/>
    <property type="gene ID" value="WBGene00003048"/>
</dbReference>
<dbReference type="EnsemblMetazoa" id="W06F12.1c.1">
    <molecule id="Q9U9Y8-3"/>
    <property type="protein sequence ID" value="W06F12.1c.1"/>
    <property type="gene ID" value="WBGene00003048"/>
</dbReference>
<dbReference type="EnsemblMetazoa" id="W06F12.1d.1">
    <molecule id="Q9U9Y8-4"/>
    <property type="protein sequence ID" value="W06F12.1d.1"/>
    <property type="gene ID" value="WBGene00003048"/>
</dbReference>
<dbReference type="EnsemblMetazoa" id="W06F12.1d.2">
    <molecule id="Q9U9Y8-4"/>
    <property type="protein sequence ID" value="W06F12.1d.2"/>
    <property type="gene ID" value="WBGene00003048"/>
</dbReference>
<dbReference type="EnsemblMetazoa" id="W06F12.1d.3">
    <molecule id="Q9U9Y8-4"/>
    <property type="protein sequence ID" value="W06F12.1d.3"/>
    <property type="gene ID" value="WBGene00003048"/>
</dbReference>
<dbReference type="EnsemblMetazoa" id="W06F12.1e.1">
    <molecule id="Q9U9Y8-5"/>
    <property type="protein sequence ID" value="W06F12.1e.1"/>
    <property type="gene ID" value="WBGene00003048"/>
</dbReference>
<dbReference type="GeneID" id="176808"/>
<dbReference type="KEGG" id="cel:CELE_W06F12.1"/>
<dbReference type="UCSC" id="W06F12.1d">
    <property type="organism name" value="c. elegans"/>
</dbReference>
<dbReference type="AGR" id="WB:WBGene00003048"/>
<dbReference type="CTD" id="176808"/>
<dbReference type="WormBase" id="W06F12.1a">
    <molecule id="Q9U9Y8-1"/>
    <property type="protein sequence ID" value="CE29476"/>
    <property type="gene ID" value="WBGene00003048"/>
    <property type="gene designation" value="lit-1"/>
</dbReference>
<dbReference type="WormBase" id="W06F12.1b">
    <molecule id="Q9U9Y8-2"/>
    <property type="protein sequence ID" value="CE29477"/>
    <property type="gene ID" value="WBGene00003048"/>
    <property type="gene designation" value="lit-1"/>
</dbReference>
<dbReference type="WormBase" id="W06F12.1c">
    <molecule id="Q9U9Y8-3"/>
    <property type="protein sequence ID" value="CE29478"/>
    <property type="gene ID" value="WBGene00003048"/>
    <property type="gene designation" value="lit-1"/>
</dbReference>
<dbReference type="WormBase" id="W06F12.1d">
    <molecule id="Q9U9Y8-4"/>
    <property type="protein sequence ID" value="CE37160"/>
    <property type="gene ID" value="WBGene00003048"/>
    <property type="gene designation" value="lit-1"/>
</dbReference>
<dbReference type="WormBase" id="W06F12.1e">
    <molecule id="Q9U9Y8-5"/>
    <property type="protein sequence ID" value="CE37161"/>
    <property type="gene ID" value="WBGene00003048"/>
    <property type="gene designation" value="lit-1"/>
</dbReference>
<dbReference type="eggNOG" id="KOG0664">
    <property type="taxonomic scope" value="Eukaryota"/>
</dbReference>
<dbReference type="GeneTree" id="ENSGT00940000168938"/>
<dbReference type="InParanoid" id="Q9U9Y8"/>
<dbReference type="OMA" id="RLNMTHE"/>
<dbReference type="OrthoDB" id="192887at2759"/>
<dbReference type="PhylomeDB" id="Q9U9Y8"/>
<dbReference type="Reactome" id="R-CEL-4086398">
    <property type="pathway name" value="Ca2+ pathway"/>
</dbReference>
<dbReference type="SignaLink" id="Q9U9Y8"/>
<dbReference type="PRO" id="PR:Q9U9Y8"/>
<dbReference type="Proteomes" id="UP000001940">
    <property type="component" value="Chromosome III"/>
</dbReference>
<dbReference type="Bgee" id="WBGene00003048">
    <property type="expression patterns" value="Expressed in pharyngeal muscle cell (C elegans) and 4 other cell types or tissues"/>
</dbReference>
<dbReference type="GO" id="GO:0005938">
    <property type="term" value="C:cell cortex"/>
    <property type="evidence" value="ECO:0000314"/>
    <property type="project" value="WormBase"/>
</dbReference>
<dbReference type="GO" id="GO:0005737">
    <property type="term" value="C:cytoplasm"/>
    <property type="evidence" value="ECO:0000314"/>
    <property type="project" value="WormBase"/>
</dbReference>
<dbReference type="GO" id="GO:0005634">
    <property type="term" value="C:nucleus"/>
    <property type="evidence" value="ECO:0000314"/>
    <property type="project" value="WormBase"/>
</dbReference>
<dbReference type="GO" id="GO:1902554">
    <property type="term" value="C:serine/threonine protein kinase complex"/>
    <property type="evidence" value="ECO:0000314"/>
    <property type="project" value="WormBase"/>
</dbReference>
<dbReference type="GO" id="GO:0005524">
    <property type="term" value="F:ATP binding"/>
    <property type="evidence" value="ECO:0007669"/>
    <property type="project" value="UniProtKB-KW"/>
</dbReference>
<dbReference type="GO" id="GO:0008013">
    <property type="term" value="F:beta-catenin binding"/>
    <property type="evidence" value="ECO:0000353"/>
    <property type="project" value="WormBase"/>
</dbReference>
<dbReference type="GO" id="GO:0004707">
    <property type="term" value="F:MAP kinase activity"/>
    <property type="evidence" value="ECO:0007669"/>
    <property type="project" value="UniProtKB-EC"/>
</dbReference>
<dbReference type="GO" id="GO:0046872">
    <property type="term" value="F:metal ion binding"/>
    <property type="evidence" value="ECO:0007669"/>
    <property type="project" value="UniProtKB-KW"/>
</dbReference>
<dbReference type="GO" id="GO:0106310">
    <property type="term" value="F:protein serine kinase activity"/>
    <property type="evidence" value="ECO:0007669"/>
    <property type="project" value="RHEA"/>
</dbReference>
<dbReference type="GO" id="GO:0004674">
    <property type="term" value="F:protein serine/threonine kinase activity"/>
    <property type="evidence" value="ECO:0000314"/>
    <property type="project" value="WormBase"/>
</dbReference>
<dbReference type="GO" id="GO:0009653">
    <property type="term" value="P:anatomical structure morphogenesis"/>
    <property type="evidence" value="ECO:0000316"/>
    <property type="project" value="WormBase"/>
</dbReference>
<dbReference type="GO" id="GO:0008356">
    <property type="term" value="P:asymmetric cell division"/>
    <property type="evidence" value="ECO:0000315"/>
    <property type="project" value="WormBase"/>
</dbReference>
<dbReference type="GO" id="GO:0045167">
    <property type="term" value="P:asymmetric protein localization involved in cell fate determination"/>
    <property type="evidence" value="ECO:0000315"/>
    <property type="project" value="WormBase"/>
</dbReference>
<dbReference type="GO" id="GO:0060070">
    <property type="term" value="P:canonical Wnt signaling pathway"/>
    <property type="evidence" value="ECO:0000315"/>
    <property type="project" value="UniProtKB"/>
</dbReference>
<dbReference type="GO" id="GO:0009792">
    <property type="term" value="P:embryo development ending in birth or egg hatching"/>
    <property type="evidence" value="ECO:0000315"/>
    <property type="project" value="WormBase"/>
</dbReference>
<dbReference type="GO" id="GO:0007492">
    <property type="term" value="P:endoderm development"/>
    <property type="evidence" value="ECO:0000315"/>
    <property type="project" value="UniProtKB"/>
</dbReference>
<dbReference type="GO" id="GO:0001714">
    <property type="term" value="P:endodermal cell fate specification"/>
    <property type="evidence" value="ECO:0000315"/>
    <property type="project" value="WormBase"/>
</dbReference>
<dbReference type="GO" id="GO:0035556">
    <property type="term" value="P:intracellular signal transduction"/>
    <property type="evidence" value="ECO:0000318"/>
    <property type="project" value="GO_Central"/>
</dbReference>
<dbReference type="GO" id="GO:0042694">
    <property type="term" value="P:muscle cell fate specification"/>
    <property type="evidence" value="ECO:0000315"/>
    <property type="project" value="WormBase"/>
</dbReference>
<dbReference type="GO" id="GO:0009949">
    <property type="term" value="P:polarity specification of anterior/posterior axis"/>
    <property type="evidence" value="ECO:0000315"/>
    <property type="project" value="ComplexPortal"/>
</dbReference>
<dbReference type="GO" id="GO:0010085">
    <property type="term" value="P:polarity specification of proximal/distal axis"/>
    <property type="evidence" value="ECO:0000315"/>
    <property type="project" value="WormBase"/>
</dbReference>
<dbReference type="GO" id="GO:0110039">
    <property type="term" value="P:positive regulation of nematode male tail tip morphogenesis"/>
    <property type="evidence" value="ECO:0000315"/>
    <property type="project" value="UniProtKB"/>
</dbReference>
<dbReference type="GO" id="GO:0016055">
    <property type="term" value="P:Wnt signaling pathway"/>
    <property type="evidence" value="ECO:0000316"/>
    <property type="project" value="WormBase"/>
</dbReference>
<dbReference type="CDD" id="cd07853">
    <property type="entry name" value="STKc_NLK"/>
    <property type="match status" value="1"/>
</dbReference>
<dbReference type="FunFam" id="1.10.510.10:FF:000162">
    <property type="entry name" value="Mitogen-activated protein kinase"/>
    <property type="match status" value="1"/>
</dbReference>
<dbReference type="FunFam" id="3.30.200.20:FF:000915">
    <property type="entry name" value="Mitogen-activated protein kinase"/>
    <property type="match status" value="1"/>
</dbReference>
<dbReference type="Gene3D" id="3.30.200.20">
    <property type="entry name" value="Phosphorylase Kinase, domain 1"/>
    <property type="match status" value="1"/>
</dbReference>
<dbReference type="Gene3D" id="1.10.510.10">
    <property type="entry name" value="Transferase(Phosphotransferase) domain 1"/>
    <property type="match status" value="1"/>
</dbReference>
<dbReference type="InterPro" id="IPR011009">
    <property type="entry name" value="Kinase-like_dom_sf"/>
</dbReference>
<dbReference type="InterPro" id="IPR050117">
    <property type="entry name" value="MAP_kinase"/>
</dbReference>
<dbReference type="InterPro" id="IPR003527">
    <property type="entry name" value="MAP_kinase_CS"/>
</dbReference>
<dbReference type="InterPro" id="IPR000719">
    <property type="entry name" value="Prot_kinase_dom"/>
</dbReference>
<dbReference type="InterPro" id="IPR017441">
    <property type="entry name" value="Protein_kinase_ATP_BS"/>
</dbReference>
<dbReference type="InterPro" id="IPR008271">
    <property type="entry name" value="Ser/Thr_kinase_AS"/>
</dbReference>
<dbReference type="PANTHER" id="PTHR24055">
    <property type="entry name" value="MITOGEN-ACTIVATED PROTEIN KINASE"/>
    <property type="match status" value="1"/>
</dbReference>
<dbReference type="Pfam" id="PF00069">
    <property type="entry name" value="Pkinase"/>
    <property type="match status" value="1"/>
</dbReference>
<dbReference type="SMART" id="SM00220">
    <property type="entry name" value="S_TKc"/>
    <property type="match status" value="1"/>
</dbReference>
<dbReference type="SUPFAM" id="SSF56112">
    <property type="entry name" value="Protein kinase-like (PK-like)"/>
    <property type="match status" value="1"/>
</dbReference>
<dbReference type="PROSITE" id="PS01351">
    <property type="entry name" value="MAPK"/>
    <property type="match status" value="1"/>
</dbReference>
<dbReference type="PROSITE" id="PS00107">
    <property type="entry name" value="PROTEIN_KINASE_ATP"/>
    <property type="match status" value="1"/>
</dbReference>
<dbReference type="PROSITE" id="PS50011">
    <property type="entry name" value="PROTEIN_KINASE_DOM"/>
    <property type="match status" value="1"/>
</dbReference>
<dbReference type="PROSITE" id="PS00108">
    <property type="entry name" value="PROTEIN_KINASE_ST"/>
    <property type="match status" value="1"/>
</dbReference>
<evidence type="ECO:0000250" key="1">
    <source>
        <dbReference type="UniProtKB" id="O54949"/>
    </source>
</evidence>
<evidence type="ECO:0000255" key="2"/>
<evidence type="ECO:0000255" key="3">
    <source>
        <dbReference type="PROSITE-ProRule" id="PRU00159"/>
    </source>
</evidence>
<evidence type="ECO:0000255" key="4">
    <source>
        <dbReference type="PROSITE-ProRule" id="PRU10027"/>
    </source>
</evidence>
<evidence type="ECO:0000269" key="5">
    <source>
    </source>
</evidence>
<evidence type="ECO:0000269" key="6">
    <source>
    </source>
</evidence>
<evidence type="ECO:0000269" key="7">
    <source>
    </source>
</evidence>
<evidence type="ECO:0000269" key="8">
    <source>
    </source>
</evidence>
<evidence type="ECO:0000269" key="9">
    <source>
    </source>
</evidence>
<evidence type="ECO:0000269" key="10">
    <source>
    </source>
</evidence>
<evidence type="ECO:0000269" key="11">
    <source>
    </source>
</evidence>
<evidence type="ECO:0000269" key="12">
    <source>
    </source>
</evidence>
<evidence type="ECO:0000269" key="13">
    <source>
    </source>
</evidence>
<evidence type="ECO:0000303" key="14">
    <source>
    </source>
</evidence>
<evidence type="ECO:0000303" key="15">
    <source>
    </source>
</evidence>
<evidence type="ECO:0000303" key="16">
    <source>
    </source>
</evidence>
<evidence type="ECO:0000305" key="17"/>
<evidence type="ECO:0000312" key="18">
    <source>
        <dbReference type="EMBL" id="AAD37360.1"/>
    </source>
</evidence>
<evidence type="ECO:0000312" key="19">
    <source>
        <dbReference type="EMBL" id="AAD39815.1"/>
    </source>
</evidence>
<evidence type="ECO:0000312" key="20">
    <source>
        <dbReference type="EMBL" id="CAB05827.2"/>
    </source>
</evidence>
<evidence type="ECO:0000312" key="21">
    <source>
        <dbReference type="WormBase" id="W06F12.1a"/>
    </source>
</evidence>
<evidence type="ECO:0000312" key="22">
    <source>
        <dbReference type="WormBase" id="W06F12.1b"/>
    </source>
</evidence>
<evidence type="ECO:0000312" key="23">
    <source>
        <dbReference type="WormBase" id="W06F12.1c"/>
    </source>
</evidence>
<evidence type="ECO:0000312" key="24">
    <source>
        <dbReference type="WormBase" id="W06F12.1e"/>
    </source>
</evidence>
<reference evidence="17 18" key="1">
    <citation type="journal article" date="1999" name="Cell">
        <title>WRM-1 activates the LIT-1 protein kinase to transduce anterior/posterior polarity signals in C. elegans.</title>
        <authorList>
            <person name="Rocheleau C.E."/>
            <person name="Yasuda J."/>
            <person name="Shin T.H."/>
            <person name="Lin R."/>
            <person name="Sawa H."/>
            <person name="Okano H."/>
            <person name="Priess J.R."/>
            <person name="Davis R.J."/>
            <person name="Mello C.C."/>
        </authorList>
    </citation>
    <scope>NUCLEOTIDE SEQUENCE [MRNA] (ISOFORMS B AND E)</scope>
    <scope>FUNCTION</scope>
    <scope>IDENTIFICATION IN THE BETA-CATENIN-LIT-1 COMPLEX</scope>
    <scope>INTERACTION WITH WRM-1 AND POP-1</scope>
    <scope>DISRUPTION PHENOTYPE</scope>
    <scope>MUTAGENESIS OF LEU-357</scope>
</reference>
<reference evidence="17 19" key="2">
    <citation type="journal article" date="1999" name="Nature">
        <title>MAP kinase and Wnt pathways converge to downregulate an HMG-domain repressor in Caenorhabditis elegans.</title>
        <authorList>
            <person name="Meneghini M.D."/>
            <person name="Ishitani T."/>
            <person name="Carter J.C."/>
            <person name="Hisamoto N."/>
            <person name="Ninomiya-Tsuji J."/>
            <person name="Thorpe C.J."/>
            <person name="Hamill D.R."/>
            <person name="Matsumoto K."/>
            <person name="Bowerman B."/>
        </authorList>
    </citation>
    <scope>NUCLEOTIDE SEQUENCE [MRNA] (ISOFORM A)</scope>
    <scope>FUNCTION</scope>
    <scope>DISRUPTION PHENOTYPE</scope>
    <scope>MUTAGENESIS OF CYS-541</scope>
</reference>
<reference evidence="20" key="3">
    <citation type="journal article" date="1998" name="Science">
        <title>Genome sequence of the nematode C. elegans: a platform for investigating biology.</title>
        <authorList>
            <consortium name="The C. elegans sequencing consortium"/>
        </authorList>
    </citation>
    <scope>NUCLEOTIDE SEQUENCE [LARGE SCALE GENOMIC DNA]</scope>
    <source>
        <strain evidence="20">Bristol N2</strain>
    </source>
</reference>
<reference evidence="17" key="4">
    <citation type="journal article" date="1997" name="Nature">
        <title>Binary specification of the embryonic lineage in Caenorhabditis elegans.</title>
        <authorList>
            <person name="Kaletta T."/>
            <person name="Schnabel H."/>
            <person name="Schnabel R."/>
        </authorList>
    </citation>
    <scope>FUNCTION</scope>
    <scope>DISRUPTION PHENOTYPE</scope>
    <scope>MUTAGENESIS OF LEU-357 AND GLU-402</scope>
</reference>
<reference evidence="17" key="5">
    <citation type="journal article" date="1999" name="Mol. Cell">
        <title>MOM-4, a MAP kinase kinase kinase-related protein, activates WRM-1/LIT-1 kinase to transduce anterior/posterior polarity signals in C. elegans.</title>
        <authorList>
            <person name="Shin T.H."/>
            <person name="Yasuda J."/>
            <person name="Rocheleau C.E."/>
            <person name="Lin R."/>
            <person name="Soto M."/>
            <person name="Bei Y."/>
            <person name="Davis R.J."/>
            <person name="Mello C.C."/>
        </authorList>
    </citation>
    <scope>MUTAGENESIS OF THR-400</scope>
</reference>
<reference evidence="17" key="6">
    <citation type="journal article" date="2000" name="Development">
        <title>Left-right asymmetry in C. elegans intestine organogenesis involves a LIN-12/Notch signaling pathway.</title>
        <authorList>
            <person name="Hermann G.J."/>
            <person name="Leung B."/>
            <person name="Priess J.R."/>
        </authorList>
    </citation>
    <scope>FUNCTION</scope>
</reference>
<reference evidence="17" key="7">
    <citation type="journal article" date="2004" name="Cell">
        <title>Phosphorylation by the beta-catenin/MAPK complex promotes 14-3-3-mediated nuclear export of TCF/POP-1 in signal-responsive cells in C. elegans.</title>
        <authorList>
            <person name="Lo M.-C."/>
            <person name="Gay F."/>
            <person name="Odom R."/>
            <person name="Shi Y."/>
            <person name="Lin R."/>
        </authorList>
    </citation>
    <scope>FUNCTION</scope>
    <scope>IDENTIFICATION IN THE BETA-CATENIN-LIT-1 COMPLEX</scope>
    <scope>INTERACTION WITH WRM-1 AND POP-1</scope>
    <scope>SUBCELLULAR LOCATION</scope>
</reference>
<reference evidence="17" key="8">
    <citation type="journal article" date="2004" name="Genes Dev.">
        <title>Identification of C. elegans DAF-12-binding sites, response elements, and target genes.</title>
        <authorList>
            <person name="Shostak Y."/>
            <person name="Van Gilst M.R."/>
            <person name="Antebi A."/>
            <person name="Yamamoto K.R."/>
        </authorList>
    </citation>
    <scope>TISSUE SPECIFICITY</scope>
    <scope>DEVELOPMENTAL STAGE</scope>
    <scope>MUTAGENESIS OF CYS-541</scope>
</reference>
<reference evidence="17" key="9">
    <citation type="journal article" date="2005" name="Genes Dev.">
        <title>Asymmetric cortical and nuclear localizations of WRM-1/beta-catenin during asymmetric cell division in C. elegans.</title>
        <authorList>
            <person name="Takeshita H."/>
            <person name="Sawa H."/>
        </authorList>
    </citation>
    <scope>SUBCELLULAR LOCATION</scope>
</reference>
<reference key="10">
    <citation type="journal article" date="2009" name="Dev. Biol.">
        <title>C. elegans pur alpha, an activator of end-1, synergizes with the Wnt pathway to specify endoderm.</title>
        <authorList>
            <person name="Witze E.S."/>
            <person name="Field E.D."/>
            <person name="Hunt D.F."/>
            <person name="Rothman J.H."/>
        </authorList>
    </citation>
    <scope>FUNCTION</scope>
    <scope>DISRUPTION PHENOTYPE</scope>
</reference>
<reference key="11">
    <citation type="journal article" date="2011" name="PLoS Genet.">
        <title>A bow-tie genetic architecture for morphogenesis suggested by a genome-wide RNAi screen in Caenorhabditis elegans.</title>
        <authorList>
            <person name="Nelson M.D."/>
            <person name="Zhou E."/>
            <person name="Kiontke K."/>
            <person name="Fradin H."/>
            <person name="Maldonado G."/>
            <person name="Martin D."/>
            <person name="Shah K."/>
            <person name="Fitch D.H."/>
        </authorList>
    </citation>
    <scope>FUNCTION</scope>
    <scope>SUBCELLULAR LOCATION</scope>
    <scope>DEVELOPMENTAL STAGE</scope>
    <scope>DISRUPTION PHENOTYPE</scope>
</reference>
<comment type="function">
    <text evidence="5 6 8 11 12 13">Has a role in the Wnt signaling pathway controlling the asymmetry of cell divisions during embryogenesis (PubMed:10380924). Operates in the AB and EMS cell lineages influencing cell specification (PubMed:10391246). Required for body wall muscle development, endoderm development, pop-1 asymmetry and T-cell division asymmetry (PubMed:10380924, PubMed:9384382). Component of the beta-catenin-lit-1 complex which promotes the phosphorylation, down-regulation and subcellular relocation of pop-1 (PubMed:10380924, PubMed:15066285). Regulates plp-1 nuclear localization in embryos (PubMed:19084000). Plays a role in male tail tip morphogenesis (PubMed:21408209).</text>
</comment>
<comment type="catalytic activity">
    <reaction evidence="1">
        <text>L-seryl-[protein] + ATP = O-phospho-L-seryl-[protein] + ADP + H(+)</text>
        <dbReference type="Rhea" id="RHEA:17989"/>
        <dbReference type="Rhea" id="RHEA-COMP:9863"/>
        <dbReference type="Rhea" id="RHEA-COMP:11604"/>
        <dbReference type="ChEBI" id="CHEBI:15378"/>
        <dbReference type="ChEBI" id="CHEBI:29999"/>
        <dbReference type="ChEBI" id="CHEBI:30616"/>
        <dbReference type="ChEBI" id="CHEBI:83421"/>
        <dbReference type="ChEBI" id="CHEBI:456216"/>
        <dbReference type="EC" id="2.7.11.24"/>
    </reaction>
</comment>
<comment type="catalytic activity">
    <reaction evidence="1">
        <text>L-threonyl-[protein] + ATP = O-phospho-L-threonyl-[protein] + ADP + H(+)</text>
        <dbReference type="Rhea" id="RHEA:46608"/>
        <dbReference type="Rhea" id="RHEA-COMP:11060"/>
        <dbReference type="Rhea" id="RHEA-COMP:11605"/>
        <dbReference type="ChEBI" id="CHEBI:15378"/>
        <dbReference type="ChEBI" id="CHEBI:30013"/>
        <dbReference type="ChEBI" id="CHEBI:30616"/>
        <dbReference type="ChEBI" id="CHEBI:61977"/>
        <dbReference type="ChEBI" id="CHEBI:456216"/>
        <dbReference type="EC" id="2.7.11.24"/>
    </reaction>
</comment>
<comment type="cofactor">
    <cofactor evidence="1">
        <name>Mg(2+)</name>
        <dbReference type="ChEBI" id="CHEBI:18420"/>
    </cofactor>
</comment>
<comment type="subunit">
    <text evidence="5 8">Component of the beta-catenin-lit-1 complex (also called the lit-1/wrm-1 complex or the wrm-1/lit-1 kinase complex) at least composed of lit-1 and wrm-1 (PubMed:10380924, PubMed:15066285). Interacts with wrm-1 (via N-terminus); the interaction is direct and activates lit-1 kinase activity which leads to the phosphorylation of pop-1 (PubMed:10380924, PubMed:15066285). This promotes pop-1 interaction with par-5 and translocation of pop-1 from the nucleus to the cytoplasm (PubMed:15066285). Interacts with pop-1 (when phosphorylated on 'Ser-118' and 'Ser-127'); the interaction is dependent on the beta-catenin-lit-1 complex (PubMed:10380924, PubMed:15066285).</text>
</comment>
<comment type="interaction">
    <interactant intactId="EBI-318513">
        <id>Q9U9Y8</id>
    </interactant>
    <interactant intactId="EBI-313822">
        <id>Q9U1S2</id>
        <label>brp-1</label>
    </interactant>
    <organismsDiffer>false</organismsDiffer>
    <experiments>3</experiments>
</comment>
<comment type="interaction">
    <interactant intactId="EBI-318513">
        <id>Q9U9Y8</id>
    </interactant>
    <interactant intactId="EBI-329142">
        <id>Q21636</id>
        <label>CELE_R02D5.1</label>
    </interactant>
    <organismsDiffer>false</organismsDiffer>
    <experiments>6</experiments>
</comment>
<comment type="interaction">
    <interactant intactId="EBI-318513">
        <id>Q9U9Y8</id>
    </interactant>
    <interactant intactId="EBI-313622">
        <id>O76449</id>
        <label>CELE_ZK1055.7</label>
    </interactant>
    <organismsDiffer>false</organismsDiffer>
    <experiments>3</experiments>
</comment>
<comment type="interaction">
    <interactant intactId="EBI-318513">
        <id>Q9U9Y8</id>
    </interactant>
    <interactant intactId="EBI-315958">
        <id>O45734</id>
        <label>cpl-1</label>
    </interactant>
    <organismsDiffer>false</organismsDiffer>
    <experiments>2</experiments>
</comment>
<comment type="interaction">
    <interactant intactId="EBI-318513">
        <id>Q9U9Y8</id>
    </interactant>
    <interactant intactId="EBI-320763">
        <id>Q19749</id>
        <label>dlat-1</label>
    </interactant>
    <organismsDiffer>false</organismsDiffer>
    <experiments>2</experiments>
</comment>
<comment type="interaction">
    <interactant intactId="EBI-318513">
        <id>Q9U9Y8</id>
    </interactant>
    <interactant intactId="EBI-320157">
        <id>Q18171</id>
        <label>spe-44</label>
    </interactant>
    <organismsDiffer>false</organismsDiffer>
    <experiments>3</experiments>
</comment>
<comment type="interaction">
    <interactant intactId="EBI-318513">
        <id>Q9U9Y8</id>
    </interactant>
    <interactant intactId="EBI-2530558">
        <id>Q10953</id>
        <label>wrm-1</label>
    </interactant>
    <organismsDiffer>false</organismsDiffer>
    <experiments>8</experiments>
</comment>
<comment type="subcellular location">
    <subcellularLocation>
        <location evidence="8 10">Cytoplasm</location>
        <location evidence="8 10">Cell cortex</location>
    </subcellularLocation>
    <subcellularLocation>
        <location evidence="8 10 12">Nucleus</location>
    </subcellularLocation>
    <text evidence="8 10 12">Located in the anterior cell cortex before and during asymmetric cell division. After division, located preferentially in the nucleus of the posterior daughter cell. Localizes to the nucleus in hyp9 and hyp10 cells prior to male tail tip morphogenesis (PubMed:21408209).</text>
</comment>
<comment type="alternative products">
    <event type="alternative splicing"/>
    <isoform>
        <id>Q9U9Y8-1</id>
        <name evidence="15 21">a</name>
        <sequence type="displayed"/>
    </isoform>
    <isoform>
        <id>Q9U9Y8-2</id>
        <name evidence="14 22">b</name>
        <sequence type="described" ref="VSP_052847 VSP_052850"/>
    </isoform>
    <isoform>
        <id>Q9U9Y8-3</id>
        <name evidence="23">c</name>
        <sequence type="described" ref="VSP_052845 VSP_052851"/>
    </isoform>
    <isoform>
        <id>Q9U9Y8-4</id>
        <name evidence="23">d</name>
        <sequence type="described" ref="VSP_052848 VSP_052849"/>
    </isoform>
    <isoform>
        <id>Q9U9Y8-5</id>
        <name evidence="14 24">e</name>
        <sequence type="described" ref="VSP_052846"/>
    </isoform>
</comment>
<comment type="tissue specificity">
    <text evidence="9">Expressed in the pharynx and seam and vulval cells.</text>
</comment>
<comment type="developmental stage">
    <text evidence="9 12">Expressed in the pharynx and seam and vulval cells in larvae (PubMed:15489294). Expressed in the male tail tip during the L4 larval stage (PubMed:21408209).</text>
</comment>
<comment type="disruption phenotype">
    <text evidence="5 6 11 12 13">Defects in body wall muscle, endoderm development and pop-1 asymmetry (PubMed:10380924, PubMed:10391246, PubMed:9384382). RNAi-mediated knockdown disrupts tail tip morphogenesis resulting in retention of the pointed larval tail tip in adult males (also known as the Lep phenotype) (PubMed:21408209). RNAi-mediated knockdown causes the transcription factor plp-1 to localize at much lower levels in nuclei and instead accumulate in the cytoplasm, during embryonic development.</text>
</comment>
<comment type="similarity">
    <text evidence="2">Belongs to the protein kinase superfamily. CMGC Ser/Thr protein kinase family. MAP kinase subfamily.</text>
</comment>
<accession>Q9U9Y8</accession>
<accession>O62395</accession>
<accession>Q69YW9</accession>
<accession>Q8WQB7</accession>
<accession>Q9U343</accession>
<accession>Q9UA07</accession>
<accession>Q9Y198</accession>
<feature type="chain" id="PRO_0000372802" description="Serine/threonine kinase NLK">
    <location>
        <begin position="1"/>
        <end position="634"/>
    </location>
</feature>
<feature type="domain" description="Protein kinase" evidence="3">
    <location>
        <begin position="240"/>
        <end position="531"/>
    </location>
</feature>
<feature type="active site" description="Proton acceptor" evidence="3 4">
    <location>
        <position position="366"/>
    </location>
</feature>
<feature type="binding site" evidence="3">
    <location>
        <begin position="246"/>
        <end position="254"/>
    </location>
    <ligand>
        <name>ATP</name>
        <dbReference type="ChEBI" id="CHEBI:30616"/>
    </ligand>
</feature>
<feature type="binding site" evidence="3">
    <location>
        <position position="269"/>
    </location>
    <ligand>
        <name>ATP</name>
        <dbReference type="ChEBI" id="CHEBI:30616"/>
    </ligand>
</feature>
<feature type="splice variant" id="VSP_052845" description="In isoform c." evidence="16">
    <location>
        <begin position="1"/>
        <end position="197"/>
    </location>
</feature>
<feature type="splice variant" id="VSP_052846" description="In isoform e." evidence="14">
    <location>
        <begin position="1"/>
        <end position="180"/>
    </location>
</feature>
<feature type="splice variant" id="VSP_052847" description="In isoform b." evidence="14">
    <location>
        <begin position="1"/>
        <end position="172"/>
    </location>
</feature>
<feature type="splice variant" id="VSP_052848" description="In isoform d." evidence="16">
    <location>
        <begin position="1"/>
        <end position="33"/>
    </location>
</feature>
<feature type="splice variant" id="VSP_052849" description="In isoform d." evidence="16">
    <original>KDTEDEFCGCLFPDPEIP</original>
    <variation>MGRNQEGQFNGAGNSESA</variation>
    <location>
        <begin position="34"/>
        <end position="51"/>
    </location>
</feature>
<feature type="splice variant" id="VSP_052850" description="In isoform b." evidence="14">
    <original>HHQQLV</original>
    <variation>MRDMIY</variation>
    <location>
        <begin position="173"/>
        <end position="178"/>
    </location>
</feature>
<feature type="splice variant" id="VSP_052851" description="In isoform c." evidence="16">
    <original>YEKNQQKQQQVQQIPTQPQ</original>
    <variation>MILIAIIESFIEYLRKIVW</variation>
    <location>
        <begin position="198"/>
        <end position="216"/>
    </location>
</feature>
<feature type="mutagenesis site" description="In t1512; intestine cells absent but have an excess of pharyngeal cells, symmetrical localization of pop-1 and symmetrical T-cell division." evidence="5 13">
    <original>L</original>
    <variation>S</variation>
    <location>
        <position position="357"/>
    </location>
</feature>
<feature type="mutagenesis site" description="No detectable kinase activity." evidence="7">
    <original>T</original>
    <variation>A</variation>
    <location>
        <position position="400"/>
    </location>
</feature>
<feature type="mutagenesis site" description="In t1534; reduced body-wall muscle." evidence="13">
    <original>E</original>
    <variation>K</variation>
    <location>
        <position position="402"/>
    </location>
</feature>
<feature type="mutagenesis site" description="In or131; loss of pop-1 asymmetry and protruding vulva phenotype and defects in gonadal migration and development." evidence="6 9">
    <original>C</original>
    <variation>Y</variation>
    <location>
        <position position="541"/>
    </location>
</feature>
<sequence>MVSWGRGKDAYYLYISREQEEDDDDSLSFYSSQKDTEDEFCGCLFPDPEIPGSSSSSGCSSSSTELYDLAAAHAALISRQQQILSQAIPIIPEHQLAAVAAHHQHHQQLHPSVQYQLVAAATHHNHHQPQAAQPHYSAVVPRSDVIQQPPHFALHHHLQNLVQQQQQQQAHHHHQQLVGEMALVSHTHPAAVGSTTCYEKNQQKQQQVQQIPTQPQVAHVSSNAILAAAQPFYPPPVQDSQPDRPIGYGAFGVVWSVTDPRSGKRVALKKMPNVFQNLASCKRVFREIKMLSSFRHDNVLSLLDILQPANPSFFQELYVLTELMQSDLHKIIVSPQALTPDHVKVFVYQILRGLKYLHTANILHRDIKPGNLLVNSNCILKICDFGLARTWDQRDRLNMTHEVVTQYYRAPELLMGARRYTGAVDIWSVGCIFAELLQRKILFQAAGPIEQLQMIIDLLGTPSQEAMKYACEGAKNHVLRAGLRAPDTQRLYKIASPDDKNHEAVDLLQKLLHFDPDKRISVEEALQHRYLEEGRLRFHSCMCSCCYTKPNMPSRLFAQDLDPRHESPFDPKWEKDMSRLSMFELREKMYQFVMDRPALYGVALCINPQSAAYKNFASSSVAQASELPPSPQAW</sequence>